<evidence type="ECO:0000250" key="1">
    <source>
        <dbReference type="UniProtKB" id="Q99685"/>
    </source>
</evidence>
<evidence type="ECO:0000269" key="2">
    <source>
    </source>
</evidence>
<evidence type="ECO:0000269" key="3">
    <source>
    </source>
</evidence>
<evidence type="ECO:0000269" key="4">
    <source>
    </source>
</evidence>
<evidence type="ECO:0000269" key="5">
    <source>
    </source>
</evidence>
<evidence type="ECO:0000269" key="6">
    <source>
    </source>
</evidence>
<evidence type="ECO:0000269" key="7">
    <source>
    </source>
</evidence>
<evidence type="ECO:0000269" key="8">
    <source>
    </source>
</evidence>
<evidence type="ECO:0000269" key="9">
    <source>
    </source>
</evidence>
<evidence type="ECO:0000303" key="10">
    <source>
    </source>
</evidence>
<evidence type="ECO:0000305" key="11"/>
<evidence type="ECO:0000312" key="12">
    <source>
        <dbReference type="MGI" id="MGI:1346042"/>
    </source>
</evidence>
<evidence type="ECO:0007744" key="13">
    <source>
    </source>
</evidence>
<evidence type="ECO:0007744" key="14">
    <source>
    </source>
</evidence>
<organism>
    <name type="scientific">Mus musculus</name>
    <name type="common">Mouse</name>
    <dbReference type="NCBI Taxonomy" id="10090"/>
    <lineage>
        <taxon>Eukaryota</taxon>
        <taxon>Metazoa</taxon>
        <taxon>Chordata</taxon>
        <taxon>Craniata</taxon>
        <taxon>Vertebrata</taxon>
        <taxon>Euteleostomi</taxon>
        <taxon>Mammalia</taxon>
        <taxon>Eutheria</taxon>
        <taxon>Euarchontoglires</taxon>
        <taxon>Glires</taxon>
        <taxon>Rodentia</taxon>
        <taxon>Myomorpha</taxon>
        <taxon>Muroidea</taxon>
        <taxon>Muridae</taxon>
        <taxon>Murinae</taxon>
        <taxon>Mus</taxon>
        <taxon>Mus</taxon>
    </lineage>
</organism>
<name>MGLL_MOUSE</name>
<proteinExistence type="evidence at protein level"/>
<keyword id="KW-0025">Alternative splicing</keyword>
<keyword id="KW-0963">Cytoplasm</keyword>
<keyword id="KW-0275">Fatty acid biosynthesis</keyword>
<keyword id="KW-0276">Fatty acid metabolism</keyword>
<keyword id="KW-0378">Hydrolase</keyword>
<keyword id="KW-0444">Lipid biosynthesis</keyword>
<keyword id="KW-0442">Lipid degradation</keyword>
<keyword id="KW-0443">Lipid metabolism</keyword>
<keyword id="KW-0472">Membrane</keyword>
<keyword id="KW-0944">Nitration</keyword>
<keyword id="KW-0597">Phosphoprotein</keyword>
<keyword id="KW-1185">Reference proteome</keyword>
<keyword id="KW-0719">Serine esterase</keyword>
<comment type="function">
    <text evidence="1 3 4 5 6 7 8 9">Converts monoacylglycerides to free fatty acids and glycerol (PubMed:17700715, PubMed:18096503, PubMed:19029917, PubMed:20554061, PubMed:20729846, PubMed:21454566, PubMed:9341166). Hydrolyzes the endocannabinoid 2-arachidonoylglycerol, and thereby contributes to the regulation of endocannabinoid signaling, nociperception and perception of pain (PubMed:17700715, PubMed:18096503, PubMed:19029917, PubMed:20554061, PubMed:20729846, PubMed:21454566, PubMed:9341166). Regulates the levels of fatty acids that serve as signaling molecules and promote cancer cell migration, invasion and tumor growth (By similarity).</text>
</comment>
<comment type="catalytic activity">
    <reaction evidence="4 6 8 9">
        <text>Hydrolyzes glycerol monoesters of long-chain fatty acids.</text>
        <dbReference type="EC" id="3.1.1.23"/>
    </reaction>
</comment>
<comment type="catalytic activity">
    <reaction evidence="6 8">
        <text>a 1-acylglycerol + H2O = glycerol + a fatty acid + H(+)</text>
        <dbReference type="Rhea" id="RHEA:34019"/>
        <dbReference type="ChEBI" id="CHEBI:15377"/>
        <dbReference type="ChEBI" id="CHEBI:15378"/>
        <dbReference type="ChEBI" id="CHEBI:17754"/>
        <dbReference type="ChEBI" id="CHEBI:28868"/>
        <dbReference type="ChEBI" id="CHEBI:35759"/>
    </reaction>
    <physiologicalReaction direction="left-to-right" evidence="6 8">
        <dbReference type="Rhea" id="RHEA:34020"/>
    </physiologicalReaction>
</comment>
<comment type="catalytic activity">
    <reaction evidence="4 6">
        <text>a 2-acylglycerol + H2O = glycerol + a fatty acid + H(+)</text>
        <dbReference type="Rhea" id="RHEA:44688"/>
        <dbReference type="ChEBI" id="CHEBI:15377"/>
        <dbReference type="ChEBI" id="CHEBI:15378"/>
        <dbReference type="ChEBI" id="CHEBI:17389"/>
        <dbReference type="ChEBI" id="CHEBI:17754"/>
        <dbReference type="ChEBI" id="CHEBI:28868"/>
    </reaction>
    <physiologicalReaction direction="left-to-right" evidence="4 6">
        <dbReference type="Rhea" id="RHEA:44689"/>
    </physiologicalReaction>
</comment>
<comment type="catalytic activity">
    <reaction evidence="4">
        <text>2-(5Z,8Z,11Z,14Z-eicosatetraenoyl)-glycerol + H2O = glycerol + (5Z,8Z,11Z,14Z)-eicosatetraenoate + H(+)</text>
        <dbReference type="Rhea" id="RHEA:26132"/>
        <dbReference type="ChEBI" id="CHEBI:15377"/>
        <dbReference type="ChEBI" id="CHEBI:15378"/>
        <dbReference type="ChEBI" id="CHEBI:17754"/>
        <dbReference type="ChEBI" id="CHEBI:32395"/>
        <dbReference type="ChEBI" id="CHEBI:52392"/>
    </reaction>
    <physiologicalReaction direction="left-to-right" evidence="4">
        <dbReference type="Rhea" id="RHEA:26133"/>
    </physiologicalReaction>
</comment>
<comment type="catalytic activity">
    <reaction evidence="1">
        <text>1-octanoylglycerol + H2O = octanoate + glycerol + H(+)</text>
        <dbReference type="Rhea" id="RHEA:44328"/>
        <dbReference type="ChEBI" id="CHEBI:15377"/>
        <dbReference type="ChEBI" id="CHEBI:15378"/>
        <dbReference type="ChEBI" id="CHEBI:17754"/>
        <dbReference type="ChEBI" id="CHEBI:25646"/>
        <dbReference type="ChEBI" id="CHEBI:85241"/>
    </reaction>
    <physiologicalReaction direction="left-to-right" evidence="1">
        <dbReference type="Rhea" id="RHEA:44329"/>
    </physiologicalReaction>
</comment>
<comment type="catalytic activity">
    <reaction evidence="1">
        <text>1-decanoylglycerol + H2O = decanoate + glycerol + H(+)</text>
        <dbReference type="Rhea" id="RHEA:44320"/>
        <dbReference type="ChEBI" id="CHEBI:15377"/>
        <dbReference type="ChEBI" id="CHEBI:15378"/>
        <dbReference type="ChEBI" id="CHEBI:17754"/>
        <dbReference type="ChEBI" id="CHEBI:27689"/>
        <dbReference type="ChEBI" id="CHEBI:75547"/>
    </reaction>
    <physiologicalReaction direction="left-to-right" evidence="1">
        <dbReference type="Rhea" id="RHEA:44321"/>
    </physiologicalReaction>
</comment>
<comment type="catalytic activity">
    <reaction evidence="1">
        <text>1-dodecanoylglycerol + H2O = dodecanoate + glycerol + H(+)</text>
        <dbReference type="Rhea" id="RHEA:44316"/>
        <dbReference type="ChEBI" id="CHEBI:15377"/>
        <dbReference type="ChEBI" id="CHEBI:15378"/>
        <dbReference type="ChEBI" id="CHEBI:17754"/>
        <dbReference type="ChEBI" id="CHEBI:18262"/>
        <dbReference type="ChEBI" id="CHEBI:75539"/>
    </reaction>
    <physiologicalReaction direction="left-to-right" evidence="1">
        <dbReference type="Rhea" id="RHEA:44317"/>
    </physiologicalReaction>
</comment>
<comment type="catalytic activity">
    <reaction evidence="1">
        <text>1-tetradecanoylglycerol + H2O = tetradecanoate + glycerol + H(+)</text>
        <dbReference type="Rhea" id="RHEA:44312"/>
        <dbReference type="ChEBI" id="CHEBI:15377"/>
        <dbReference type="ChEBI" id="CHEBI:15378"/>
        <dbReference type="ChEBI" id="CHEBI:17754"/>
        <dbReference type="ChEBI" id="CHEBI:30807"/>
        <dbReference type="ChEBI" id="CHEBI:75562"/>
    </reaction>
    <physiologicalReaction direction="left-to-right" evidence="1">
        <dbReference type="Rhea" id="RHEA:44313"/>
    </physiologicalReaction>
</comment>
<comment type="catalytic activity">
    <reaction evidence="6">
        <text>2-hexadecanoylglycerol + H2O = glycerol + hexadecanoate + H(+)</text>
        <dbReference type="Rhea" id="RHEA:39963"/>
        <dbReference type="ChEBI" id="CHEBI:7896"/>
        <dbReference type="ChEBI" id="CHEBI:15377"/>
        <dbReference type="ChEBI" id="CHEBI:15378"/>
        <dbReference type="ChEBI" id="CHEBI:17754"/>
        <dbReference type="ChEBI" id="CHEBI:75455"/>
    </reaction>
    <physiologicalReaction direction="left-to-right" evidence="6">
        <dbReference type="Rhea" id="RHEA:39964"/>
    </physiologicalReaction>
</comment>
<comment type="catalytic activity">
    <reaction evidence="6 8">
        <text>1-(9Z-octadecenoyl)-glycerol + H2O = glycerol + (9Z)-octadecenoate + H(+)</text>
        <dbReference type="Rhea" id="RHEA:38487"/>
        <dbReference type="ChEBI" id="CHEBI:15377"/>
        <dbReference type="ChEBI" id="CHEBI:15378"/>
        <dbReference type="ChEBI" id="CHEBI:17754"/>
        <dbReference type="ChEBI" id="CHEBI:30823"/>
        <dbReference type="ChEBI" id="CHEBI:75342"/>
    </reaction>
    <physiologicalReaction direction="left-to-right" evidence="6 8">
        <dbReference type="Rhea" id="RHEA:38488"/>
    </physiologicalReaction>
</comment>
<comment type="catalytic activity">
    <reaction evidence="1">
        <text>2-(9Z-octadecenoyl)-glycerol + H2O = glycerol + (9Z)-octadecenoate + H(+)</text>
        <dbReference type="Rhea" id="RHEA:38491"/>
        <dbReference type="ChEBI" id="CHEBI:15377"/>
        <dbReference type="ChEBI" id="CHEBI:15378"/>
        <dbReference type="ChEBI" id="CHEBI:17754"/>
        <dbReference type="ChEBI" id="CHEBI:30823"/>
        <dbReference type="ChEBI" id="CHEBI:73990"/>
    </reaction>
    <physiologicalReaction direction="left-to-right" evidence="1">
        <dbReference type="Rhea" id="RHEA:38492"/>
    </physiologicalReaction>
</comment>
<comment type="catalytic activity">
    <reaction evidence="1">
        <text>2-(9Z,12Z-octadecadienoyl)-glycerol + H2O = (9Z,12Z)-octadecadienoate + glycerol + H(+)</text>
        <dbReference type="Rhea" id="RHEA:44732"/>
        <dbReference type="ChEBI" id="CHEBI:15377"/>
        <dbReference type="ChEBI" id="CHEBI:15378"/>
        <dbReference type="ChEBI" id="CHEBI:17754"/>
        <dbReference type="ChEBI" id="CHEBI:30245"/>
        <dbReference type="ChEBI" id="CHEBI:75457"/>
    </reaction>
    <physiologicalReaction direction="left-to-right" evidence="1">
        <dbReference type="Rhea" id="RHEA:44733"/>
    </physiologicalReaction>
</comment>
<comment type="catalytic activity">
    <reaction evidence="1">
        <text>1-(5Z,8Z,11Z,14Z-eicosatetraenoyl)-glycerol + H2O = glycerol + (5Z,8Z,11Z,14Z)-eicosatetraenoate + H(+)</text>
        <dbReference type="Rhea" id="RHEA:44728"/>
        <dbReference type="ChEBI" id="CHEBI:15377"/>
        <dbReference type="ChEBI" id="CHEBI:15378"/>
        <dbReference type="ChEBI" id="CHEBI:17754"/>
        <dbReference type="ChEBI" id="CHEBI:32395"/>
        <dbReference type="ChEBI" id="CHEBI:75612"/>
    </reaction>
    <physiologicalReaction direction="left-to-right" evidence="1">
        <dbReference type="Rhea" id="RHEA:44729"/>
    </physiologicalReaction>
</comment>
<comment type="catalytic activity">
    <reaction evidence="1">
        <text>1-(9Z,12Z-octadecadienoyl)-glycerol + H2O = (9Z,12Z)-octadecadienoate + glycerol + H(+)</text>
        <dbReference type="Rhea" id="RHEA:48428"/>
        <dbReference type="ChEBI" id="CHEBI:15377"/>
        <dbReference type="ChEBI" id="CHEBI:15378"/>
        <dbReference type="ChEBI" id="CHEBI:17754"/>
        <dbReference type="ChEBI" id="CHEBI:30245"/>
        <dbReference type="ChEBI" id="CHEBI:75568"/>
    </reaction>
    <physiologicalReaction direction="left-to-right" evidence="1">
        <dbReference type="Rhea" id="RHEA:48429"/>
    </physiologicalReaction>
</comment>
<comment type="catalytic activity">
    <reaction evidence="6">
        <text>1-hexadecanoylglycerol + H2O = glycerol + hexadecanoate + H(+)</text>
        <dbReference type="Rhea" id="RHEA:39959"/>
        <dbReference type="ChEBI" id="CHEBI:7896"/>
        <dbReference type="ChEBI" id="CHEBI:15377"/>
        <dbReference type="ChEBI" id="CHEBI:15378"/>
        <dbReference type="ChEBI" id="CHEBI:17754"/>
        <dbReference type="ChEBI" id="CHEBI:69081"/>
    </reaction>
    <physiologicalReaction direction="left-to-right" evidence="6">
        <dbReference type="Rhea" id="RHEA:39960"/>
    </physiologicalReaction>
</comment>
<comment type="catalytic activity">
    <reaction evidence="1">
        <text>1-octadecanoylglycerol + H2O = octadecanoate + glycerol + H(+)</text>
        <dbReference type="Rhea" id="RHEA:38363"/>
        <dbReference type="ChEBI" id="CHEBI:15377"/>
        <dbReference type="ChEBI" id="CHEBI:15378"/>
        <dbReference type="ChEBI" id="CHEBI:17754"/>
        <dbReference type="ChEBI" id="CHEBI:25629"/>
        <dbReference type="ChEBI" id="CHEBI:75555"/>
    </reaction>
    <physiologicalReaction direction="left-to-right" evidence="1">
        <dbReference type="Rhea" id="RHEA:38364"/>
    </physiologicalReaction>
</comment>
<comment type="catalytic activity">
    <reaction evidence="1">
        <text>prostaglandin E2 1-glyceryl ester + H2O = prostaglandin E2 + glycerol + H(+)</text>
        <dbReference type="Rhea" id="RHEA:48296"/>
        <dbReference type="ChEBI" id="CHEBI:15377"/>
        <dbReference type="ChEBI" id="CHEBI:15378"/>
        <dbReference type="ChEBI" id="CHEBI:17754"/>
        <dbReference type="ChEBI" id="CHEBI:90230"/>
        <dbReference type="ChEBI" id="CHEBI:606564"/>
    </reaction>
    <physiologicalReaction direction="left-to-right" evidence="1">
        <dbReference type="Rhea" id="RHEA:48297"/>
    </physiologicalReaction>
</comment>
<comment type="catalytic activity">
    <reaction evidence="1">
        <text>prostaglandin D2-1-glycerol ester + H2O = prostaglandin D2 + glycerol + H(+)</text>
        <dbReference type="Rhea" id="RHEA:45412"/>
        <dbReference type="ChEBI" id="CHEBI:15377"/>
        <dbReference type="ChEBI" id="CHEBI:15378"/>
        <dbReference type="ChEBI" id="CHEBI:17754"/>
        <dbReference type="ChEBI" id="CHEBI:57406"/>
        <dbReference type="ChEBI" id="CHEBI:85232"/>
    </reaction>
    <physiologicalReaction direction="left-to-right" evidence="1">
        <dbReference type="Rhea" id="RHEA:45413"/>
    </physiologicalReaction>
</comment>
<comment type="catalytic activity">
    <reaction evidence="1">
        <text>2-glyceryl-15-deoxy-Delta(12,14)-prostaglandin J2 + H2O = 15-deoxy-Delta(12,14)-prostaglandin J2 + glycerol + H(+)</text>
        <dbReference type="Rhea" id="RHEA:45416"/>
        <dbReference type="ChEBI" id="CHEBI:15377"/>
        <dbReference type="ChEBI" id="CHEBI:15378"/>
        <dbReference type="ChEBI" id="CHEBI:17754"/>
        <dbReference type="ChEBI" id="CHEBI:85236"/>
        <dbReference type="ChEBI" id="CHEBI:85238"/>
    </reaction>
    <physiologicalReaction direction="left-to-right" evidence="1">
        <dbReference type="Rhea" id="RHEA:45417"/>
    </physiologicalReaction>
</comment>
<comment type="catalytic activity">
    <reaction evidence="1">
        <text>prostaglandin F2alpha 1-glyceryl ester + H2O = prostaglandin F2alpha + glycerol + H(+)</text>
        <dbReference type="Rhea" id="RHEA:48300"/>
        <dbReference type="ChEBI" id="CHEBI:15377"/>
        <dbReference type="ChEBI" id="CHEBI:15378"/>
        <dbReference type="ChEBI" id="CHEBI:17754"/>
        <dbReference type="ChEBI" id="CHEBI:57404"/>
        <dbReference type="ChEBI" id="CHEBI:90233"/>
    </reaction>
    <physiologicalReaction direction="left-to-right" evidence="1">
        <dbReference type="Rhea" id="RHEA:48301"/>
    </physiologicalReaction>
</comment>
<comment type="pathway">
    <text evidence="4 9">Glycerolipid metabolism; triacylglycerol degradation.</text>
</comment>
<comment type="subunit">
    <text evidence="1">Homodimer.</text>
</comment>
<comment type="subcellular location">
    <subcellularLocation>
        <location evidence="4">Cytoplasm</location>
        <location evidence="4">Cytosol</location>
    </subcellularLocation>
    <subcellularLocation>
        <location>Membrane</location>
        <topology evidence="4">Peripheral membrane protein</topology>
    </subcellularLocation>
</comment>
<comment type="alternative products">
    <event type="alternative splicing"/>
    <isoform>
        <id>O35678-1</id>
        <name>1</name>
        <sequence type="displayed"/>
    </isoform>
    <isoform>
        <id>O35678-2</id>
        <name>2</name>
        <sequence type="described" ref="VSP_010315"/>
    </isoform>
</comment>
<comment type="tissue specificity">
    <text evidence="2">Ubiquitous.</text>
</comment>
<comment type="disruption phenotype">
    <text evidence="6 7">Mice display a reduction in monoglyceride hydrolase activity and a concomitant increase in monoglyceride levels in adipose tissue, brain, and liver (PubMed:20554061). Ten-fold increase in brain 2-arachidonoylglycerol levels, combined with low levels of brain arachidonic acid (PubMed:20554061, PubMed:20729846).</text>
</comment>
<comment type="miscellaneous">
    <text>Short-term inhibition causes analgesia, while long-term inhibition causes tolerance to endocannabinoids acting on brain cannabinoid receptor CNR1, and a reduction in brain cannabinoid receptor CNR1 activity.</text>
</comment>
<comment type="similarity">
    <text evidence="11">Belongs to the AB hydrolase superfamily. Monoacylglycerol lipase family.</text>
</comment>
<feature type="chain" id="PRO_0000191266" description="Monoglyceride lipase">
    <location>
        <begin position="1"/>
        <end position="303"/>
    </location>
</feature>
<feature type="active site" description="Nucleophile" evidence="9">
    <location>
        <position position="122"/>
    </location>
</feature>
<feature type="active site" description="Charge relay system" evidence="9">
    <location>
        <position position="239"/>
    </location>
</feature>
<feature type="active site" description="Charge relay system" evidence="9">
    <location>
        <position position="269"/>
    </location>
</feature>
<feature type="modified residue" description="Phosphothreonine" evidence="14">
    <location>
        <position position="10"/>
    </location>
</feature>
<feature type="modified residue" description="3'-nitrotyrosine" evidence="13">
    <location>
        <position position="58"/>
    </location>
</feature>
<feature type="modified residue" description="Phosphoserine" evidence="14">
    <location>
        <position position="189"/>
    </location>
</feature>
<feature type="splice variant" id="VSP_010315" description="In isoform 2." evidence="10">
    <original>VGHGQSEGERMVVSDFQVFVRDVLQHVDTIQKDYPDVPIFLLGHSMGGAISILVAAERPTYFSGMVLISPLVLANPESASTLKVLAAKLLNFVLPNMTLGRIDSSVLSRNKSEVDLYNSDPLVCRAGLKVCFGIQLLNAVARVERAMPRLTLPFLLLQGSADRLCDSKGAYLLMESSRSQDKTLKMYEGAYHVLHRELPEVTNSVLHEVNSWVSHRIAAAGAGCPP</original>
    <variation>AVMLSAALQSALVIFVRLIWQIIFQGYPRGVCCGGRCHY</variation>
    <location>
        <begin position="78"/>
        <end position="303"/>
    </location>
</feature>
<feature type="mutagenesis site" description="Abolishes activity." evidence="9">
    <original>S</original>
    <variation>A</variation>
    <location>
        <position position="122"/>
    </location>
</feature>
<feature type="mutagenesis site" description="Abolishes activity." evidence="9">
    <original>D</original>
    <variation>A</variation>
    <location>
        <position position="239"/>
    </location>
</feature>
<feature type="mutagenesis site" description="Slightly reduces activity." evidence="9">
    <original>D</original>
    <variation>A</variation>
    <location>
        <position position="243"/>
    </location>
</feature>
<feature type="mutagenesis site" description="Abolishes activity." evidence="9">
    <original>H</original>
    <variation>A</variation>
    <location>
        <position position="269"/>
    </location>
</feature>
<feature type="mutagenesis site" description="Reduces activity." evidence="9">
    <original>H</original>
    <variation>A</variation>
    <location>
        <position position="272"/>
    </location>
</feature>
<feature type="mutagenesis site" description="Slightly reduces activity." evidence="9">
    <original>H</original>
    <variation>A</variation>
    <location>
        <position position="284"/>
    </location>
</feature>
<feature type="mutagenesis site" description="Slightly reduces activity." evidence="9">
    <original>H</original>
    <variation>A</variation>
    <location>
        <position position="292"/>
    </location>
</feature>
<protein>
    <recommendedName>
        <fullName evidence="12">Monoglyceride lipase</fullName>
        <shortName>MGL</shortName>
        <ecNumber evidence="4 6 8 9">3.1.1.23</ecNumber>
    </recommendedName>
    <alternativeName>
        <fullName>Monoacylglycerol lipase</fullName>
        <shortName>MAGL</shortName>
    </alternativeName>
</protein>
<gene>
    <name evidence="12" type="primary">Mgll</name>
</gene>
<sequence length="303" mass="33388">MPEASSPRRTPQNVPYQDLPHLVNADGQYLFCRYWKPSGTPKALIFVSHGAGEHCGRYDELAHMLKGLDMLVFAHDHVGHGQSEGERMVVSDFQVFVRDVLQHVDTIQKDYPDVPIFLLGHSMGGAISILVAAERPTYFSGMVLISPLVLANPESASTLKVLAAKLLNFVLPNMTLGRIDSSVLSRNKSEVDLYNSDPLVCRAGLKVCFGIQLLNAVARVERAMPRLTLPFLLLQGSADRLCDSKGAYLLMESSRSQDKTLKMYEGAYHVLHRELPEVTNSVLHEVNSWVSHRIAAAGAGCPP</sequence>
<accession>O35678</accession>
<accession>Q3V2R0</accession>
<accession>Q9D9G8</accession>
<dbReference type="EC" id="3.1.1.23" evidence="4 6 8 9"/>
<dbReference type="EMBL" id="AJ001118">
    <property type="protein sequence ID" value="CAA04544.1"/>
    <property type="molecule type" value="mRNA"/>
</dbReference>
<dbReference type="EMBL" id="AJ316580">
    <property type="protein sequence ID" value="CAC69874.1"/>
    <property type="molecule type" value="mRNA"/>
</dbReference>
<dbReference type="EMBL" id="AK006949">
    <property type="protein sequence ID" value="BAB24800.1"/>
    <property type="molecule type" value="mRNA"/>
</dbReference>
<dbReference type="EMBL" id="AK131645">
    <property type="protein sequence ID" value="BAE20737.1"/>
    <property type="molecule type" value="mRNA"/>
</dbReference>
<dbReference type="EMBL" id="BC057965">
    <property type="protein sequence ID" value="AAH57965.1"/>
    <property type="molecule type" value="mRNA"/>
</dbReference>
<dbReference type="CCDS" id="CCDS20338.1">
    <molecule id="O35678-1"/>
</dbReference>
<dbReference type="RefSeq" id="NP_001159721.1">
    <property type="nucleotide sequence ID" value="NM_001166249.1"/>
</dbReference>
<dbReference type="RefSeq" id="NP_001159722.1">
    <property type="nucleotide sequence ID" value="NM_001166250.1"/>
</dbReference>
<dbReference type="RefSeq" id="NP_001159723.1">
    <property type="nucleotide sequence ID" value="NM_001166251.1"/>
</dbReference>
<dbReference type="RefSeq" id="NP_001397466.1">
    <molecule id="O35678-2"/>
    <property type="nucleotide sequence ID" value="NM_001410537.1"/>
</dbReference>
<dbReference type="RefSeq" id="NP_035974.1">
    <molecule id="O35678-1"/>
    <property type="nucleotide sequence ID" value="NM_011844.5"/>
</dbReference>
<dbReference type="SMR" id="O35678"/>
<dbReference type="BioGRID" id="204809">
    <property type="interactions" value="4"/>
</dbReference>
<dbReference type="FunCoup" id="O35678">
    <property type="interactions" value="193"/>
</dbReference>
<dbReference type="IntAct" id="O35678">
    <property type="interactions" value="1"/>
</dbReference>
<dbReference type="STRING" id="10090.ENSMUSP00000127374"/>
<dbReference type="BindingDB" id="O35678"/>
<dbReference type="ChEMBL" id="CHEMBL5774"/>
<dbReference type="DrugCentral" id="O35678"/>
<dbReference type="GuidetoPHARMACOLOGY" id="1399"/>
<dbReference type="SwissLipids" id="SLP:000000321"/>
<dbReference type="SwissLipids" id="SLP:000000521"/>
<dbReference type="ESTHER" id="mouse-MGLL">
    <property type="family name" value="Monoglyceridelipase_lysophospholip"/>
</dbReference>
<dbReference type="MEROPS" id="S33.979"/>
<dbReference type="GlyGen" id="O35678">
    <property type="glycosylation" value="1 site, 1 O-linked glycan (1 site)"/>
</dbReference>
<dbReference type="iPTMnet" id="O35678"/>
<dbReference type="PhosphoSitePlus" id="O35678"/>
<dbReference type="SwissPalm" id="O35678"/>
<dbReference type="jPOST" id="O35678"/>
<dbReference type="PaxDb" id="10090-ENSMUSP00000109215"/>
<dbReference type="PeptideAtlas" id="O35678"/>
<dbReference type="ProteomicsDB" id="292234">
    <molecule id="O35678-1"/>
</dbReference>
<dbReference type="ProteomicsDB" id="292235">
    <molecule id="O35678-2"/>
</dbReference>
<dbReference type="ABCD" id="O35678">
    <property type="antibodies" value="1 sequenced antibody"/>
</dbReference>
<dbReference type="Antibodypedia" id="1635">
    <property type="antibodies" value="508 antibodies from 36 providers"/>
</dbReference>
<dbReference type="DNASU" id="23945"/>
<dbReference type="Ensembl" id="ENSMUST00000089449.5">
    <molecule id="O35678-1"/>
    <property type="protein sequence ID" value="ENSMUSP00000086872.3"/>
    <property type="gene ID" value="ENSMUSG00000033174.18"/>
</dbReference>
<dbReference type="Ensembl" id="ENSMUST00000113585.9">
    <molecule id="O35678-1"/>
    <property type="protein sequence ID" value="ENSMUSP00000109215.3"/>
    <property type="gene ID" value="ENSMUSG00000033174.18"/>
</dbReference>
<dbReference type="Ensembl" id="ENSMUST00000150180.4">
    <molecule id="O35678-2"/>
    <property type="protein sequence ID" value="ENSMUSP00000145068.2"/>
    <property type="gene ID" value="ENSMUSG00000033174.18"/>
</dbReference>
<dbReference type="GeneID" id="23945"/>
<dbReference type="KEGG" id="mmu:23945"/>
<dbReference type="UCSC" id="uc009cvp.2">
    <molecule id="O35678-1"/>
    <property type="organism name" value="mouse"/>
</dbReference>
<dbReference type="UCSC" id="uc009cvq.2">
    <molecule id="O35678-2"/>
    <property type="organism name" value="mouse"/>
</dbReference>
<dbReference type="AGR" id="MGI:1346042"/>
<dbReference type="CTD" id="11343"/>
<dbReference type="MGI" id="MGI:1346042">
    <property type="gene designation" value="Mgll"/>
</dbReference>
<dbReference type="VEuPathDB" id="HostDB:ENSMUSG00000033174"/>
<dbReference type="eggNOG" id="KOG1455">
    <property type="taxonomic scope" value="Eukaryota"/>
</dbReference>
<dbReference type="GeneTree" id="ENSGT00390000011364"/>
<dbReference type="InParanoid" id="O35678"/>
<dbReference type="PhylomeDB" id="O35678"/>
<dbReference type="TreeFam" id="TF329184"/>
<dbReference type="BRENDA" id="3.1.1.23">
    <property type="organism ID" value="3474"/>
</dbReference>
<dbReference type="Reactome" id="R-MMU-1482883">
    <property type="pathway name" value="Acyl chain remodeling of DAG and TAG"/>
</dbReference>
<dbReference type="Reactome" id="R-MMU-426048">
    <property type="pathway name" value="Arachidonate production from DAG"/>
</dbReference>
<dbReference type="SABIO-RK" id="O35678"/>
<dbReference type="UniPathway" id="UPA00256"/>
<dbReference type="BioGRID-ORCS" id="23945">
    <property type="hits" value="2 hits in 79 CRISPR screens"/>
</dbReference>
<dbReference type="CD-CODE" id="CE726F99">
    <property type="entry name" value="Postsynaptic density"/>
</dbReference>
<dbReference type="ChiTaRS" id="Mgll">
    <property type="organism name" value="mouse"/>
</dbReference>
<dbReference type="PRO" id="PR:O35678"/>
<dbReference type="Proteomes" id="UP000000589">
    <property type="component" value="Chromosome 6"/>
</dbReference>
<dbReference type="RNAct" id="O35678">
    <property type="molecule type" value="protein"/>
</dbReference>
<dbReference type="Bgee" id="ENSMUSG00000033174">
    <property type="expression patterns" value="Expressed in iris and 245 other cell types or tissues"/>
</dbReference>
<dbReference type="ExpressionAtlas" id="O35678">
    <property type="expression patterns" value="baseline and differential"/>
</dbReference>
<dbReference type="GO" id="GO:0030424">
    <property type="term" value="C:axon"/>
    <property type="evidence" value="ECO:0000314"/>
    <property type="project" value="MGI"/>
</dbReference>
<dbReference type="GO" id="GO:0150053">
    <property type="term" value="C:cerebellar climbing fiber to Purkinje cell synapse"/>
    <property type="evidence" value="ECO:0000314"/>
    <property type="project" value="SynGO"/>
</dbReference>
<dbReference type="GO" id="GO:0005829">
    <property type="term" value="C:cytosol"/>
    <property type="evidence" value="ECO:0000314"/>
    <property type="project" value="UniProtKB"/>
</dbReference>
<dbReference type="GO" id="GO:0005811">
    <property type="term" value="C:lipid droplet"/>
    <property type="evidence" value="ECO:0000304"/>
    <property type="project" value="Reactome"/>
</dbReference>
<dbReference type="GO" id="GO:0016020">
    <property type="term" value="C:membrane"/>
    <property type="evidence" value="ECO:0000314"/>
    <property type="project" value="UniProtKB"/>
</dbReference>
<dbReference type="GO" id="GO:0098688">
    <property type="term" value="C:parallel fiber to Purkinje cell synapse"/>
    <property type="evidence" value="ECO:0000314"/>
    <property type="project" value="SynGO"/>
</dbReference>
<dbReference type="GO" id="GO:0098793">
    <property type="term" value="C:presynapse"/>
    <property type="evidence" value="ECO:0000314"/>
    <property type="project" value="SynGO"/>
</dbReference>
<dbReference type="GO" id="GO:0045202">
    <property type="term" value="C:synapse"/>
    <property type="evidence" value="ECO:0000314"/>
    <property type="project" value="MGI"/>
</dbReference>
<dbReference type="GO" id="GO:0043196">
    <property type="term" value="C:varicosity"/>
    <property type="evidence" value="ECO:0000314"/>
    <property type="project" value="MGI"/>
</dbReference>
<dbReference type="GO" id="GO:0047372">
    <property type="term" value="F:monoacylglycerol lipase activity"/>
    <property type="evidence" value="ECO:0000314"/>
    <property type="project" value="UniProtKB"/>
</dbReference>
<dbReference type="GO" id="GO:0046464">
    <property type="term" value="P:acylglycerol catabolic process"/>
    <property type="evidence" value="ECO:0000314"/>
    <property type="project" value="UniProtKB"/>
</dbReference>
<dbReference type="GO" id="GO:0019369">
    <property type="term" value="P:arachidonate metabolic process"/>
    <property type="evidence" value="ECO:0000315"/>
    <property type="project" value="UniProtKB"/>
</dbReference>
<dbReference type="GO" id="GO:0006633">
    <property type="term" value="P:fatty acid biosynthetic process"/>
    <property type="evidence" value="ECO:0007669"/>
    <property type="project" value="UniProtKB-KW"/>
</dbReference>
<dbReference type="GO" id="GO:0060292">
    <property type="term" value="P:long-term synaptic depression"/>
    <property type="evidence" value="ECO:0000315"/>
    <property type="project" value="MGI"/>
</dbReference>
<dbReference type="GO" id="GO:0052651">
    <property type="term" value="P:monoacylglycerol catabolic process"/>
    <property type="evidence" value="ECO:0000314"/>
    <property type="project" value="UniProtKB"/>
</dbReference>
<dbReference type="GO" id="GO:0030516">
    <property type="term" value="P:regulation of axon extension"/>
    <property type="evidence" value="ECO:0000315"/>
    <property type="project" value="MGI"/>
</dbReference>
<dbReference type="GO" id="GO:2000124">
    <property type="term" value="P:regulation of endocannabinoid signaling pathway"/>
    <property type="evidence" value="ECO:0000315"/>
    <property type="project" value="UniProtKB"/>
</dbReference>
<dbReference type="GO" id="GO:0050727">
    <property type="term" value="P:regulation of inflammatory response"/>
    <property type="evidence" value="ECO:0000315"/>
    <property type="project" value="UniProtKB"/>
</dbReference>
<dbReference type="GO" id="GO:0099178">
    <property type="term" value="P:regulation of retrograde trans-synaptic signaling by endocanabinoid"/>
    <property type="evidence" value="ECO:0000314"/>
    <property type="project" value="SynGO"/>
</dbReference>
<dbReference type="GO" id="GO:0051930">
    <property type="term" value="P:regulation of sensory perception of pain"/>
    <property type="evidence" value="ECO:0000315"/>
    <property type="project" value="UniProtKB"/>
</dbReference>
<dbReference type="GO" id="GO:0009966">
    <property type="term" value="P:regulation of signal transduction"/>
    <property type="evidence" value="ECO:0000315"/>
    <property type="project" value="UniProtKB"/>
</dbReference>
<dbReference type="GO" id="GO:0019433">
    <property type="term" value="P:triglyceride catabolic process"/>
    <property type="evidence" value="ECO:0007669"/>
    <property type="project" value="UniProtKB-UniPathway"/>
</dbReference>
<dbReference type="FunFam" id="3.40.50.1820:FF:000066">
    <property type="entry name" value="Monoglyceride lipase"/>
    <property type="match status" value="1"/>
</dbReference>
<dbReference type="Gene3D" id="3.40.50.1820">
    <property type="entry name" value="alpha/beta hydrolase"/>
    <property type="match status" value="1"/>
</dbReference>
<dbReference type="InterPro" id="IPR000073">
    <property type="entry name" value="AB_hydrolase_1"/>
</dbReference>
<dbReference type="InterPro" id="IPR029058">
    <property type="entry name" value="AB_hydrolase_fold"/>
</dbReference>
<dbReference type="InterPro" id="IPR022742">
    <property type="entry name" value="Hydrolase_4"/>
</dbReference>
<dbReference type="InterPro" id="IPR051044">
    <property type="entry name" value="MAG_DAG_Lipase"/>
</dbReference>
<dbReference type="PANTHER" id="PTHR11614">
    <property type="entry name" value="PHOSPHOLIPASE-RELATED"/>
    <property type="match status" value="1"/>
</dbReference>
<dbReference type="Pfam" id="PF12146">
    <property type="entry name" value="Hydrolase_4"/>
    <property type="match status" value="1"/>
</dbReference>
<dbReference type="PRINTS" id="PR00111">
    <property type="entry name" value="ABHYDROLASE"/>
</dbReference>
<dbReference type="SUPFAM" id="SSF53474">
    <property type="entry name" value="alpha/beta-Hydrolases"/>
    <property type="match status" value="1"/>
</dbReference>
<dbReference type="PROSITE" id="PS00120">
    <property type="entry name" value="LIPASE_SER"/>
    <property type="match status" value="1"/>
</dbReference>
<reference key="1">
    <citation type="journal article" date="1997" name="J. Biol. Chem.">
        <title>cDNA cloning, tissue distribution, and identification of the catalytic triad of monoglyceride lipase. Evolutionary relationship to esterases, lysophospholipases, and haloperoxidases.</title>
        <authorList>
            <person name="Karlsson M."/>
            <person name="Contreras J.A."/>
            <person name="Hellman U."/>
            <person name="Tornqvist H."/>
            <person name="Holm C."/>
        </authorList>
    </citation>
    <scope>NUCLEOTIDE SEQUENCE [MRNA] (ISOFORM 1)</scope>
    <scope>FUNCTION</scope>
    <scope>CATALYTIC ACTIVITY</scope>
    <scope>PATHWAY</scope>
    <scope>ACTIVE SITE</scope>
    <scope>MUTAGENESIS OF SER-122; ASP-239; ASP-243; HIS-269; HIS-272; HIS-284 AND HIS-292</scope>
    <source>
        <tissue>Adipose tissue</tissue>
    </source>
</reference>
<reference key="2">
    <citation type="journal article" date="2001" name="Gene">
        <title>Exon-intron organization and chromosomal localization of the mouse monoglyceride lipase gene.</title>
        <authorList>
            <person name="Karlsson M."/>
            <person name="Reue K."/>
            <person name="Xia Y.-R."/>
            <person name="Lusis A.J."/>
            <person name="Langin D."/>
            <person name="Tornqvist H."/>
            <person name="Holm C."/>
        </authorList>
    </citation>
    <scope>NUCLEOTIDE SEQUENCE [MRNA] (ISOFORM 1)</scope>
    <scope>TISSUE SPECIFICITY</scope>
    <source>
        <tissue>Adipose tissue</tissue>
    </source>
</reference>
<reference key="3">
    <citation type="journal article" date="2005" name="Science">
        <title>The transcriptional landscape of the mammalian genome.</title>
        <authorList>
            <person name="Carninci P."/>
            <person name="Kasukawa T."/>
            <person name="Katayama S."/>
            <person name="Gough J."/>
            <person name="Frith M.C."/>
            <person name="Maeda N."/>
            <person name="Oyama R."/>
            <person name="Ravasi T."/>
            <person name="Lenhard B."/>
            <person name="Wells C."/>
            <person name="Kodzius R."/>
            <person name="Shimokawa K."/>
            <person name="Bajic V.B."/>
            <person name="Brenner S.E."/>
            <person name="Batalov S."/>
            <person name="Forrest A.R."/>
            <person name="Zavolan M."/>
            <person name="Davis M.J."/>
            <person name="Wilming L.G."/>
            <person name="Aidinis V."/>
            <person name="Allen J.E."/>
            <person name="Ambesi-Impiombato A."/>
            <person name="Apweiler R."/>
            <person name="Aturaliya R.N."/>
            <person name="Bailey T.L."/>
            <person name="Bansal M."/>
            <person name="Baxter L."/>
            <person name="Beisel K.W."/>
            <person name="Bersano T."/>
            <person name="Bono H."/>
            <person name="Chalk A.M."/>
            <person name="Chiu K.P."/>
            <person name="Choudhary V."/>
            <person name="Christoffels A."/>
            <person name="Clutterbuck D.R."/>
            <person name="Crowe M.L."/>
            <person name="Dalla E."/>
            <person name="Dalrymple B.P."/>
            <person name="de Bono B."/>
            <person name="Della Gatta G."/>
            <person name="di Bernardo D."/>
            <person name="Down T."/>
            <person name="Engstrom P."/>
            <person name="Fagiolini M."/>
            <person name="Faulkner G."/>
            <person name="Fletcher C.F."/>
            <person name="Fukushima T."/>
            <person name="Furuno M."/>
            <person name="Futaki S."/>
            <person name="Gariboldi M."/>
            <person name="Georgii-Hemming P."/>
            <person name="Gingeras T.R."/>
            <person name="Gojobori T."/>
            <person name="Green R.E."/>
            <person name="Gustincich S."/>
            <person name="Harbers M."/>
            <person name="Hayashi Y."/>
            <person name="Hensch T.K."/>
            <person name="Hirokawa N."/>
            <person name="Hill D."/>
            <person name="Huminiecki L."/>
            <person name="Iacono M."/>
            <person name="Ikeo K."/>
            <person name="Iwama A."/>
            <person name="Ishikawa T."/>
            <person name="Jakt M."/>
            <person name="Kanapin A."/>
            <person name="Katoh M."/>
            <person name="Kawasawa Y."/>
            <person name="Kelso J."/>
            <person name="Kitamura H."/>
            <person name="Kitano H."/>
            <person name="Kollias G."/>
            <person name="Krishnan S.P."/>
            <person name="Kruger A."/>
            <person name="Kummerfeld S.K."/>
            <person name="Kurochkin I.V."/>
            <person name="Lareau L.F."/>
            <person name="Lazarevic D."/>
            <person name="Lipovich L."/>
            <person name="Liu J."/>
            <person name="Liuni S."/>
            <person name="McWilliam S."/>
            <person name="Madan Babu M."/>
            <person name="Madera M."/>
            <person name="Marchionni L."/>
            <person name="Matsuda H."/>
            <person name="Matsuzawa S."/>
            <person name="Miki H."/>
            <person name="Mignone F."/>
            <person name="Miyake S."/>
            <person name="Morris K."/>
            <person name="Mottagui-Tabar S."/>
            <person name="Mulder N."/>
            <person name="Nakano N."/>
            <person name="Nakauchi H."/>
            <person name="Ng P."/>
            <person name="Nilsson R."/>
            <person name="Nishiguchi S."/>
            <person name="Nishikawa S."/>
            <person name="Nori F."/>
            <person name="Ohara O."/>
            <person name="Okazaki Y."/>
            <person name="Orlando V."/>
            <person name="Pang K.C."/>
            <person name="Pavan W.J."/>
            <person name="Pavesi G."/>
            <person name="Pesole G."/>
            <person name="Petrovsky N."/>
            <person name="Piazza S."/>
            <person name="Reed J."/>
            <person name="Reid J.F."/>
            <person name="Ring B.Z."/>
            <person name="Ringwald M."/>
            <person name="Rost B."/>
            <person name="Ruan Y."/>
            <person name="Salzberg S.L."/>
            <person name="Sandelin A."/>
            <person name="Schneider C."/>
            <person name="Schoenbach C."/>
            <person name="Sekiguchi K."/>
            <person name="Semple C.A."/>
            <person name="Seno S."/>
            <person name="Sessa L."/>
            <person name="Sheng Y."/>
            <person name="Shibata Y."/>
            <person name="Shimada H."/>
            <person name="Shimada K."/>
            <person name="Silva D."/>
            <person name="Sinclair B."/>
            <person name="Sperling S."/>
            <person name="Stupka E."/>
            <person name="Sugiura K."/>
            <person name="Sultana R."/>
            <person name="Takenaka Y."/>
            <person name="Taki K."/>
            <person name="Tammoja K."/>
            <person name="Tan S.L."/>
            <person name="Tang S."/>
            <person name="Taylor M.S."/>
            <person name="Tegner J."/>
            <person name="Teichmann S.A."/>
            <person name="Ueda H.R."/>
            <person name="van Nimwegen E."/>
            <person name="Verardo R."/>
            <person name="Wei C.L."/>
            <person name="Yagi K."/>
            <person name="Yamanishi H."/>
            <person name="Zabarovsky E."/>
            <person name="Zhu S."/>
            <person name="Zimmer A."/>
            <person name="Hide W."/>
            <person name="Bult C."/>
            <person name="Grimmond S.M."/>
            <person name="Teasdale R.D."/>
            <person name="Liu E.T."/>
            <person name="Brusic V."/>
            <person name="Quackenbush J."/>
            <person name="Wahlestedt C."/>
            <person name="Mattick J.S."/>
            <person name="Hume D.A."/>
            <person name="Kai C."/>
            <person name="Sasaki D."/>
            <person name="Tomaru Y."/>
            <person name="Fukuda S."/>
            <person name="Kanamori-Katayama M."/>
            <person name="Suzuki M."/>
            <person name="Aoki J."/>
            <person name="Arakawa T."/>
            <person name="Iida J."/>
            <person name="Imamura K."/>
            <person name="Itoh M."/>
            <person name="Kato T."/>
            <person name="Kawaji H."/>
            <person name="Kawagashira N."/>
            <person name="Kawashima T."/>
            <person name="Kojima M."/>
            <person name="Kondo S."/>
            <person name="Konno H."/>
            <person name="Nakano K."/>
            <person name="Ninomiya N."/>
            <person name="Nishio T."/>
            <person name="Okada M."/>
            <person name="Plessy C."/>
            <person name="Shibata K."/>
            <person name="Shiraki T."/>
            <person name="Suzuki S."/>
            <person name="Tagami M."/>
            <person name="Waki K."/>
            <person name="Watahiki A."/>
            <person name="Okamura-Oho Y."/>
            <person name="Suzuki H."/>
            <person name="Kawai J."/>
            <person name="Hayashizaki Y."/>
        </authorList>
    </citation>
    <scope>NUCLEOTIDE SEQUENCE [LARGE SCALE MRNA] (ISOFORMS 1 AND 2)</scope>
    <source>
        <strain>C57BL/6J</strain>
        <tissue>Cerebellum</tissue>
        <tissue>Testis</tissue>
    </source>
</reference>
<reference key="4">
    <citation type="journal article" date="2004" name="Genome Res.">
        <title>The status, quality, and expansion of the NIH full-length cDNA project: the Mammalian Gene Collection (MGC).</title>
        <authorList>
            <consortium name="The MGC Project Team"/>
        </authorList>
    </citation>
    <scope>NUCLEOTIDE SEQUENCE [LARGE SCALE MRNA] (ISOFORM 1)</scope>
    <source>
        <strain>FVB/N</strain>
        <tissue>Colon</tissue>
    </source>
</reference>
<reference key="5">
    <citation type="journal article" date="2006" name="Biochemistry">
        <title>Endogenously nitrated proteins in mouse brain: links to neurodegenerative disease.</title>
        <authorList>
            <person name="Sacksteder C.A."/>
            <person name="Qian W.-J."/>
            <person name="Knyushko T.V."/>
            <person name="Wang H."/>
            <person name="Chin M.H."/>
            <person name="Lacan G."/>
            <person name="Melega W.P."/>
            <person name="Camp D.G. II"/>
            <person name="Smith R.D."/>
            <person name="Smith D.J."/>
            <person name="Squier T.C."/>
            <person name="Bigelow D.J."/>
        </authorList>
    </citation>
    <scope>NITRATION [LARGE SCALE ANALYSIS] AT TYR-58</scope>
    <scope>IDENTIFICATION BY MASS SPECTROMETRY [LARGE SCALE ANALYSIS]</scope>
    <source>
        <tissue>Brain</tissue>
    </source>
</reference>
<reference key="6">
    <citation type="journal article" date="2007" name="Br. J. Pharmacol.">
        <title>The inhibition of monoacylglycerol lipase by URB602 showed an anti-inflammatory and anti-nociceptive effect in a murine model of acute inflammation.</title>
        <authorList>
            <person name="Comelli F."/>
            <person name="Giagnoni G."/>
            <person name="Bettoni I."/>
            <person name="Colleoni M."/>
            <person name="Costa B."/>
        </authorList>
    </citation>
    <scope>FUNCTION</scope>
</reference>
<reference key="7">
    <citation type="journal article" date="2007" name="Chem. Biol.">
        <title>A comprehensive profile of brain enzymes that hydrolyze the endocannabinoid 2-arachidonoylglycerol.</title>
        <authorList>
            <person name="Blankman J.L."/>
            <person name="Simon G.M."/>
            <person name="Cravatt B.F."/>
        </authorList>
    </citation>
    <scope>FUNCTION</scope>
    <scope>CATALYTIC ACTIVITY</scope>
    <scope>PATHWAY</scope>
    <scope>SUBCELLULAR LOCATION</scope>
</reference>
<reference key="8">
    <citation type="journal article" date="2009" name="Nat. Chem. Biol.">
        <title>Selective blockade of 2-arachidonoylglycerol hydrolysis produces cannabinoid behavioral effects.</title>
        <authorList>
            <person name="Long J.Z."/>
            <person name="Li W."/>
            <person name="Booker L."/>
            <person name="Burston J.J."/>
            <person name="Kinsey S.G."/>
            <person name="Schlosburg J.E."/>
            <person name="Pavon F.J."/>
            <person name="Serrano A.M."/>
            <person name="Selley D.E."/>
            <person name="Parsons L.H."/>
            <person name="Lichtman A.H."/>
            <person name="Cravatt B.F."/>
        </authorList>
    </citation>
    <scope>FUNCTION</scope>
</reference>
<reference key="9">
    <citation type="journal article" date="2010" name="Biochim. Biophys. Acta">
        <title>Identification of Yju3p as functional orthologue of mammalian monoglyceride lipase in the yeast Saccharomyces cerevisiae.</title>
        <authorList>
            <person name="Heier C."/>
            <person name="Taschler U."/>
            <person name="Rengachari S."/>
            <person name="Oberer M."/>
            <person name="Wolinski H."/>
            <person name="Natter K."/>
            <person name="Kohlwein S.D."/>
            <person name="Leber R."/>
            <person name="Zimmermann R."/>
        </authorList>
    </citation>
    <scope>FUNCTION</scope>
    <scope>CATALYTIC ACTIVITY</scope>
    <scope>DISRUPTION PHENOTYPE</scope>
</reference>
<reference key="10">
    <citation type="journal article" date="2010" name="Cell">
        <title>A tissue-specific atlas of mouse protein phosphorylation and expression.</title>
        <authorList>
            <person name="Huttlin E.L."/>
            <person name="Jedrychowski M.P."/>
            <person name="Elias J.E."/>
            <person name="Goswami T."/>
            <person name="Rad R."/>
            <person name="Beausoleil S.A."/>
            <person name="Villen J."/>
            <person name="Haas W."/>
            <person name="Sowa M.E."/>
            <person name="Gygi S.P."/>
        </authorList>
    </citation>
    <scope>PHOSPHORYLATION [LARGE SCALE ANALYSIS] AT THR-10 AND SER-189</scope>
    <scope>IDENTIFICATION BY MASS SPECTROMETRY [LARGE SCALE ANALYSIS]</scope>
    <source>
        <tissue>Brain</tissue>
        <tissue>Brown adipose tissue</tissue>
        <tissue>Heart</tissue>
        <tissue>Kidney</tissue>
        <tissue>Liver</tissue>
        <tissue>Lung</tissue>
        <tissue>Pancreas</tissue>
        <tissue>Spleen</tissue>
        <tissue>Testis</tissue>
    </source>
</reference>
<reference key="11">
    <citation type="journal article" date="2010" name="Nat. Neurosci.">
        <title>Chronic monoacylglycerol lipase blockade causes functional antagonism of the endocannabinoid system.</title>
        <authorList>
            <person name="Schlosburg J.E."/>
            <person name="Blankman J.L."/>
            <person name="Long J.Z."/>
            <person name="Nomura D.K."/>
            <person name="Pan B."/>
            <person name="Kinsey S.G."/>
            <person name="Nguyen P.T."/>
            <person name="Ramesh D."/>
            <person name="Booker L."/>
            <person name="Burston J.J."/>
            <person name="Thomas E.A."/>
            <person name="Selley D.E."/>
            <person name="Sim-Selley L.J."/>
            <person name="Liu Q.S."/>
            <person name="Lichtman A.H."/>
            <person name="Cravatt B.F."/>
        </authorList>
    </citation>
    <scope>FUNCTION</scope>
    <scope>DISRUPTION PHENOTYPE</scope>
</reference>
<reference key="12">
    <citation type="journal article" date="2011" name="J. Biol. Chem.">
        <title>Monoglyceride lipase deficiency in mice impairs lipolysis and attenuates diet-induced insulin resistance.</title>
        <authorList>
            <person name="Taschler U."/>
            <person name="Radner F.P."/>
            <person name="Heier C."/>
            <person name="Schreiber R."/>
            <person name="Schweiger M."/>
            <person name="Schoiswohl G."/>
            <person name="Preiss-Landl K."/>
            <person name="Jaeger D."/>
            <person name="Reiter B."/>
            <person name="Koefeler H.C."/>
            <person name="Wojciechowski J."/>
            <person name="Theussl C."/>
            <person name="Penninger J.M."/>
            <person name="Lass A."/>
            <person name="Haemmerle G."/>
            <person name="Zechner R."/>
            <person name="Zimmermann R."/>
        </authorList>
    </citation>
    <scope>FUNCTION</scope>
    <scope>CATALYTIC ACTIVITY</scope>
</reference>